<comment type="function">
    <text evidence="1 5">Serine/threonine protein kinase involved in the cytoplasm to vacuole transport (Cvt) and found to be essential in autophagy, where it is required for the formation of autophagosomes. Involved in the clearance of protein aggregates which cannot be efficiently cleared by the proteasome. Required for selective autophagic degradation of the nucleus (nucleophagy) as well as for mitophagy which contributes to regulate mitochondrial quantity and quality by eliminating the mitochondria to a basal level to fulfill cellular energy requirements and preventing excess ROS production. Also involved in endoplasmic reticulum-specific autophagic process, in selective removal of ER-associated degradation (ERAD) substrates. Plays a key role in ATG9 and ATG23 cycling through the pre-autophagosomal structure and is necessary to promote ATG18 binding to ATG9 through phosphorylation of ATG9. Catalyzes phosphorylation of ATG4, decreasing the interaction between ATG4 and ATG8 and impairing deconjugation of PE-conjugated forms of ATG8 (By similarity). Required for wild-type budding of haploid sporidia and for complete symptom development during pathogenic growth such as gall formation and teliospore production in ears of mature maize (PubMed:20618705).</text>
</comment>
<comment type="catalytic activity">
    <reaction evidence="1">
        <text>L-seryl-[protein] + ATP = O-phospho-L-seryl-[protein] + ADP + H(+)</text>
        <dbReference type="Rhea" id="RHEA:17989"/>
        <dbReference type="Rhea" id="RHEA-COMP:9863"/>
        <dbReference type="Rhea" id="RHEA-COMP:11604"/>
        <dbReference type="ChEBI" id="CHEBI:15378"/>
        <dbReference type="ChEBI" id="CHEBI:29999"/>
        <dbReference type="ChEBI" id="CHEBI:30616"/>
        <dbReference type="ChEBI" id="CHEBI:83421"/>
        <dbReference type="ChEBI" id="CHEBI:456216"/>
        <dbReference type="EC" id="2.7.11.1"/>
    </reaction>
</comment>
<comment type="catalytic activity">
    <reaction evidence="1">
        <text>L-threonyl-[protein] + ATP = O-phospho-L-threonyl-[protein] + ADP + H(+)</text>
        <dbReference type="Rhea" id="RHEA:46608"/>
        <dbReference type="Rhea" id="RHEA-COMP:11060"/>
        <dbReference type="Rhea" id="RHEA-COMP:11605"/>
        <dbReference type="ChEBI" id="CHEBI:15378"/>
        <dbReference type="ChEBI" id="CHEBI:30013"/>
        <dbReference type="ChEBI" id="CHEBI:30616"/>
        <dbReference type="ChEBI" id="CHEBI:61977"/>
        <dbReference type="ChEBI" id="CHEBI:456216"/>
        <dbReference type="EC" id="2.7.11.1"/>
    </reaction>
</comment>
<comment type="subunit">
    <text evidence="1">Homodimer. Forms a ternary complex with ATG13 and ATG17.</text>
</comment>
<comment type="subcellular location">
    <subcellularLocation>
        <location evidence="1">Cytoplasm</location>
    </subcellularLocation>
    <subcellularLocation>
        <location evidence="1">Preautophagosomal structure membrane</location>
        <topology evidence="1">Peripheral membrane protein</topology>
    </subcellularLocation>
</comment>
<comment type="induction">
    <text evidence="5">Transcripts accumulate during carbon stress conditions.</text>
</comment>
<comment type="disruption phenotype">
    <text evidence="5">Prevents vacuolar accumulation of autophagosomes and affects survival during carbon starvation.</text>
</comment>
<comment type="similarity">
    <text evidence="2">Belongs to the protein kinase superfamily. Ser/Thr protein kinase family. APG1/unc-51/ULK1 subfamily.</text>
</comment>
<feature type="chain" id="PRO_0000085653" description="Serine/threonine-protein kinase ATG1">
    <location>
        <begin position="1"/>
        <end position="990"/>
    </location>
</feature>
<feature type="domain" description="Protein kinase" evidence="2">
    <location>
        <begin position="15"/>
        <end position="334"/>
    </location>
</feature>
<feature type="region of interest" description="Disordered" evidence="4">
    <location>
        <begin position="375"/>
        <end position="499"/>
    </location>
</feature>
<feature type="region of interest" description="Disordered" evidence="4">
    <location>
        <begin position="529"/>
        <end position="566"/>
    </location>
</feature>
<feature type="region of interest" description="Disordered" evidence="4">
    <location>
        <begin position="579"/>
        <end position="614"/>
    </location>
</feature>
<feature type="region of interest" description="Disordered" evidence="4">
    <location>
        <begin position="750"/>
        <end position="784"/>
    </location>
</feature>
<feature type="region of interest" description="Disordered" evidence="4">
    <location>
        <begin position="970"/>
        <end position="990"/>
    </location>
</feature>
<feature type="compositionally biased region" description="Polar residues" evidence="4">
    <location>
        <begin position="375"/>
        <end position="408"/>
    </location>
</feature>
<feature type="compositionally biased region" description="Low complexity" evidence="4">
    <location>
        <begin position="529"/>
        <end position="554"/>
    </location>
</feature>
<feature type="compositionally biased region" description="Low complexity" evidence="4">
    <location>
        <begin position="587"/>
        <end position="613"/>
    </location>
</feature>
<feature type="compositionally biased region" description="Polar residues" evidence="4">
    <location>
        <begin position="750"/>
        <end position="771"/>
    </location>
</feature>
<feature type="compositionally biased region" description="Low complexity" evidence="4">
    <location>
        <begin position="772"/>
        <end position="784"/>
    </location>
</feature>
<feature type="active site" description="Proton acceptor" evidence="2 3">
    <location>
        <position position="165"/>
    </location>
</feature>
<feature type="binding site" evidence="2">
    <location>
        <begin position="21"/>
        <end position="29"/>
    </location>
    <ligand>
        <name>ATP</name>
        <dbReference type="ChEBI" id="CHEBI:30616"/>
    </ligand>
</feature>
<feature type="binding site" evidence="2">
    <location>
        <position position="44"/>
    </location>
    <ligand>
        <name>ATP</name>
        <dbReference type="ChEBI" id="CHEBI:30616"/>
    </ligand>
</feature>
<keyword id="KW-0067">ATP-binding</keyword>
<keyword id="KW-0072">Autophagy</keyword>
<keyword id="KW-0963">Cytoplasm</keyword>
<keyword id="KW-0418">Kinase</keyword>
<keyword id="KW-0472">Membrane</keyword>
<keyword id="KW-0547">Nucleotide-binding</keyword>
<keyword id="KW-0653">Protein transport</keyword>
<keyword id="KW-1185">Reference proteome</keyword>
<keyword id="KW-0723">Serine/threonine-protein kinase</keyword>
<keyword id="KW-0808">Transferase</keyword>
<keyword id="KW-0813">Transport</keyword>
<gene>
    <name evidence="6" type="primary">ATG1</name>
    <name type="ORF">UMAG_06363</name>
</gene>
<dbReference type="EC" id="2.7.11.1" evidence="1"/>
<dbReference type="EMBL" id="CM003162">
    <property type="protein sequence ID" value="KIS65660.1"/>
    <property type="molecule type" value="Genomic_DNA"/>
</dbReference>
<dbReference type="RefSeq" id="XP_011392657.1">
    <property type="nucleotide sequence ID" value="XM_011394355.1"/>
</dbReference>
<dbReference type="SMR" id="Q4P0K0"/>
<dbReference type="FunCoup" id="Q4P0K0">
    <property type="interactions" value="106"/>
</dbReference>
<dbReference type="STRING" id="237631.Q4P0K0"/>
<dbReference type="EnsemblFungi" id="KIS65660">
    <property type="protein sequence ID" value="KIS65660"/>
    <property type="gene ID" value="UMAG_06363"/>
</dbReference>
<dbReference type="GeneID" id="23565972"/>
<dbReference type="KEGG" id="uma:UMAG_06363"/>
<dbReference type="VEuPathDB" id="FungiDB:UMAG_06363"/>
<dbReference type="eggNOG" id="KOG0595">
    <property type="taxonomic scope" value="Eukaryota"/>
</dbReference>
<dbReference type="HOGENOM" id="CLU_006447_0_0_1"/>
<dbReference type="InParanoid" id="Q4P0K0"/>
<dbReference type="OMA" id="INNVVQW"/>
<dbReference type="OrthoDB" id="346907at2759"/>
<dbReference type="PHI-base" id="PHI:2498"/>
<dbReference type="Proteomes" id="UP000000561">
    <property type="component" value="Chromosome 23"/>
</dbReference>
<dbReference type="GO" id="GO:0005776">
    <property type="term" value="C:autophagosome"/>
    <property type="evidence" value="ECO:0000318"/>
    <property type="project" value="GO_Central"/>
</dbReference>
<dbReference type="GO" id="GO:0005737">
    <property type="term" value="C:cytoplasm"/>
    <property type="evidence" value="ECO:0000318"/>
    <property type="project" value="GO_Central"/>
</dbReference>
<dbReference type="GO" id="GO:0005829">
    <property type="term" value="C:cytosol"/>
    <property type="evidence" value="ECO:0000318"/>
    <property type="project" value="GO_Central"/>
</dbReference>
<dbReference type="GO" id="GO:0000407">
    <property type="term" value="C:phagophore assembly site"/>
    <property type="evidence" value="ECO:0000318"/>
    <property type="project" value="GO_Central"/>
</dbReference>
<dbReference type="GO" id="GO:0034045">
    <property type="term" value="C:phagophore assembly site membrane"/>
    <property type="evidence" value="ECO:0000318"/>
    <property type="project" value="GO_Central"/>
</dbReference>
<dbReference type="GO" id="GO:0005524">
    <property type="term" value="F:ATP binding"/>
    <property type="evidence" value="ECO:0007669"/>
    <property type="project" value="UniProtKB-KW"/>
</dbReference>
<dbReference type="GO" id="GO:0106310">
    <property type="term" value="F:protein serine kinase activity"/>
    <property type="evidence" value="ECO:0007669"/>
    <property type="project" value="RHEA"/>
</dbReference>
<dbReference type="GO" id="GO:0004674">
    <property type="term" value="F:protein serine/threonine kinase activity"/>
    <property type="evidence" value="ECO:0000318"/>
    <property type="project" value="GO_Central"/>
</dbReference>
<dbReference type="GO" id="GO:0000045">
    <property type="term" value="P:autophagosome assembly"/>
    <property type="evidence" value="ECO:0000318"/>
    <property type="project" value="GO_Central"/>
</dbReference>
<dbReference type="GO" id="GO:0000423">
    <property type="term" value="P:mitophagy"/>
    <property type="evidence" value="ECO:0000318"/>
    <property type="project" value="GO_Central"/>
</dbReference>
<dbReference type="GO" id="GO:0034727">
    <property type="term" value="P:piecemeal microautophagy of the nucleus"/>
    <property type="evidence" value="ECO:0000318"/>
    <property type="project" value="GO_Central"/>
</dbReference>
<dbReference type="GO" id="GO:0015031">
    <property type="term" value="P:protein transport"/>
    <property type="evidence" value="ECO:0007669"/>
    <property type="project" value="UniProtKB-KW"/>
</dbReference>
<dbReference type="GO" id="GO:0010506">
    <property type="term" value="P:regulation of autophagy"/>
    <property type="evidence" value="ECO:0000318"/>
    <property type="project" value="GO_Central"/>
</dbReference>
<dbReference type="GO" id="GO:0042594">
    <property type="term" value="P:response to starvation"/>
    <property type="evidence" value="ECO:0000318"/>
    <property type="project" value="GO_Central"/>
</dbReference>
<dbReference type="GO" id="GO:0061709">
    <property type="term" value="P:reticulophagy"/>
    <property type="evidence" value="ECO:0000318"/>
    <property type="project" value="GO_Central"/>
</dbReference>
<dbReference type="CDD" id="cd14009">
    <property type="entry name" value="STKc_ATG1_ULK_like"/>
    <property type="match status" value="1"/>
</dbReference>
<dbReference type="FunFam" id="3.30.200.20:FF:000003">
    <property type="entry name" value="Non-specific serine/threonine protein kinase"/>
    <property type="match status" value="1"/>
</dbReference>
<dbReference type="FunFam" id="1.10.510.10:FF:000915">
    <property type="entry name" value="Serine/threonine-protein kinase ATG1"/>
    <property type="match status" value="1"/>
</dbReference>
<dbReference type="Gene3D" id="3.30.200.20">
    <property type="entry name" value="Phosphorylase Kinase, domain 1"/>
    <property type="match status" value="1"/>
</dbReference>
<dbReference type="Gene3D" id="1.10.510.10">
    <property type="entry name" value="Transferase(Phosphotransferase) domain 1"/>
    <property type="match status" value="1"/>
</dbReference>
<dbReference type="InterPro" id="IPR045269">
    <property type="entry name" value="Atg1-like"/>
</dbReference>
<dbReference type="InterPro" id="IPR048941">
    <property type="entry name" value="ATG1-like_MIT2"/>
</dbReference>
<dbReference type="InterPro" id="IPR022708">
    <property type="entry name" value="Atg1-like_tMIT"/>
</dbReference>
<dbReference type="InterPro" id="IPR011009">
    <property type="entry name" value="Kinase-like_dom_sf"/>
</dbReference>
<dbReference type="InterPro" id="IPR000719">
    <property type="entry name" value="Prot_kinase_dom"/>
</dbReference>
<dbReference type="InterPro" id="IPR017441">
    <property type="entry name" value="Protein_kinase_ATP_BS"/>
</dbReference>
<dbReference type="InterPro" id="IPR008271">
    <property type="entry name" value="Ser/Thr_kinase_AS"/>
</dbReference>
<dbReference type="PANTHER" id="PTHR24348:SF22">
    <property type="entry name" value="NON-SPECIFIC SERINE_THREONINE PROTEIN KINASE"/>
    <property type="match status" value="1"/>
</dbReference>
<dbReference type="PANTHER" id="PTHR24348">
    <property type="entry name" value="SERINE/THREONINE-PROTEIN KINASE UNC-51-RELATED"/>
    <property type="match status" value="1"/>
</dbReference>
<dbReference type="Pfam" id="PF12063">
    <property type="entry name" value="ATG1-like_MIT1"/>
    <property type="match status" value="1"/>
</dbReference>
<dbReference type="Pfam" id="PF21127">
    <property type="entry name" value="ATG1-like_MIT2"/>
    <property type="match status" value="1"/>
</dbReference>
<dbReference type="Pfam" id="PF00069">
    <property type="entry name" value="Pkinase"/>
    <property type="match status" value="1"/>
</dbReference>
<dbReference type="SMART" id="SM00220">
    <property type="entry name" value="S_TKc"/>
    <property type="match status" value="1"/>
</dbReference>
<dbReference type="SUPFAM" id="SSF56112">
    <property type="entry name" value="Protein kinase-like (PK-like)"/>
    <property type="match status" value="1"/>
</dbReference>
<dbReference type="PROSITE" id="PS00107">
    <property type="entry name" value="PROTEIN_KINASE_ATP"/>
    <property type="match status" value="1"/>
</dbReference>
<dbReference type="PROSITE" id="PS50011">
    <property type="entry name" value="PROTEIN_KINASE_DOM"/>
    <property type="match status" value="1"/>
</dbReference>
<dbReference type="PROSITE" id="PS00108">
    <property type="entry name" value="PROTEIN_KINASE_ST"/>
    <property type="match status" value="1"/>
</dbReference>
<accession>Q4P0K0</accession>
<accession>A0A0D1DT05</accession>
<sequence>MSKSSTGRDERIGDFVIENEIGKGSFAVVHKGYRLQPREPVAIKIVIRKKLTPKLLDNLEGEIAILKAIHHPNIVELKECLKTEHQIYLVMAFCASGDLAQYIKKRFDIYERAGMAEPDSLTKGFKPTYPHPVDGGLNETIVRSILTQLAAALEFMRARDIVHRDIKPQNLLLQPPDAAFLALGNPREIPQMKVADFGFARHLSVNTLAETLCGSPLYMAPEILRFEKYDAKADLWSVGAVLFEMTVGKPPFRAANHVELLKRIERGEDKIKFPDERSAGSLAREAARRQELGEAPLPPPHPVSEDVKILIRQLLRQRPVSRMSFDDFFASPVISDFKAFIRPRAQPEAVERYEDLQRSERSVIIPSSGIKHVSVSSIEASTQQPGVQPPVSTATSPPALESRSTQEASPKAITGETIAPNKTPREDARPPRTLPRAFSAKYVTGEPPQPEDLEKRVPPTMTRTPSSPGIPEGSLLSGERDEAPQATTEHFGSSKGGEDSFLGKEYVLIEKQSVEVNALADELAASPQSRLGLASRRPSRLSRLSSGPLPSAPGASPPTAPPTILSSKPIRIANNTNTASTGAFALPPGSRPSSFPRRASLSSSGSPSTRQGGQVITNMDAVASTQSNRRDGNASSFPKDEVSVLGQRLAGFGLSGSGVGGGPSSALAKAISMASLRLFGVPSGVSLRDAAALVRTRAQRRGIARATDSLDEAEMTLLSTLEDLGQKAFVLSEFADSKLAHFFPDGPHQLSQELDSSTATSGISPSRNSVQGSARRVGSISSSSSSAVDPVAAEAASAEALMLYVRSLAFLQRAITLTKRHVESRSRPGVPAVTSAELNDVVQWLRARFNEVYDKADFARSRCSELPESAQQVDKLIFDKAVEVARAAATDELENNREGSGWDPSHCLLAYETANSMLSSLLDPGEDAMSLSEGSILMIDGYVKSINKRLWTLQEQFGGGVGAVGAAGASPVGVDAEARPGVSRSRTESP</sequence>
<organism>
    <name type="scientific">Mycosarcoma maydis</name>
    <name type="common">Corn smut fungus</name>
    <name type="synonym">Ustilago maydis</name>
    <dbReference type="NCBI Taxonomy" id="5270"/>
    <lineage>
        <taxon>Eukaryota</taxon>
        <taxon>Fungi</taxon>
        <taxon>Dikarya</taxon>
        <taxon>Basidiomycota</taxon>
        <taxon>Ustilaginomycotina</taxon>
        <taxon>Ustilaginomycetes</taxon>
        <taxon>Ustilaginales</taxon>
        <taxon>Ustilaginaceae</taxon>
        <taxon>Mycosarcoma</taxon>
    </lineage>
</organism>
<evidence type="ECO:0000250" key="1">
    <source>
        <dbReference type="UniProtKB" id="P53104"/>
    </source>
</evidence>
<evidence type="ECO:0000255" key="2">
    <source>
        <dbReference type="PROSITE-ProRule" id="PRU00159"/>
    </source>
</evidence>
<evidence type="ECO:0000255" key="3">
    <source>
        <dbReference type="PROSITE-ProRule" id="PRU10027"/>
    </source>
</evidence>
<evidence type="ECO:0000256" key="4">
    <source>
        <dbReference type="SAM" id="MobiDB-lite"/>
    </source>
</evidence>
<evidence type="ECO:0000269" key="5">
    <source>
    </source>
</evidence>
<evidence type="ECO:0000303" key="6">
    <source>
    </source>
</evidence>
<name>ATG1_MYCMD</name>
<proteinExistence type="evidence at transcript level"/>
<reference key="1">
    <citation type="journal article" date="2006" name="Nature">
        <title>Insights from the genome of the biotrophic fungal plant pathogen Ustilago maydis.</title>
        <authorList>
            <person name="Kaemper J."/>
            <person name="Kahmann R."/>
            <person name="Boelker M."/>
            <person name="Ma L.-J."/>
            <person name="Brefort T."/>
            <person name="Saville B.J."/>
            <person name="Banuett F."/>
            <person name="Kronstad J.W."/>
            <person name="Gold S.E."/>
            <person name="Mueller O."/>
            <person name="Perlin M.H."/>
            <person name="Woesten H.A.B."/>
            <person name="de Vries R."/>
            <person name="Ruiz-Herrera J."/>
            <person name="Reynaga-Pena C.G."/>
            <person name="Snetselaar K."/>
            <person name="McCann M."/>
            <person name="Perez-Martin J."/>
            <person name="Feldbruegge M."/>
            <person name="Basse C.W."/>
            <person name="Steinberg G."/>
            <person name="Ibeas J.I."/>
            <person name="Holloman W."/>
            <person name="Guzman P."/>
            <person name="Farman M.L."/>
            <person name="Stajich J.E."/>
            <person name="Sentandreu R."/>
            <person name="Gonzalez-Prieto J.M."/>
            <person name="Kennell J.C."/>
            <person name="Molina L."/>
            <person name="Schirawski J."/>
            <person name="Mendoza-Mendoza A."/>
            <person name="Greilinger D."/>
            <person name="Muench K."/>
            <person name="Roessel N."/>
            <person name="Scherer M."/>
            <person name="Vranes M."/>
            <person name="Ladendorf O."/>
            <person name="Vincon V."/>
            <person name="Fuchs U."/>
            <person name="Sandrock B."/>
            <person name="Meng S."/>
            <person name="Ho E.C.H."/>
            <person name="Cahill M.J."/>
            <person name="Boyce K.J."/>
            <person name="Klose J."/>
            <person name="Klosterman S.J."/>
            <person name="Deelstra H.J."/>
            <person name="Ortiz-Castellanos L."/>
            <person name="Li W."/>
            <person name="Sanchez-Alonso P."/>
            <person name="Schreier P.H."/>
            <person name="Haeuser-Hahn I."/>
            <person name="Vaupel M."/>
            <person name="Koopmann E."/>
            <person name="Friedrich G."/>
            <person name="Voss H."/>
            <person name="Schlueter T."/>
            <person name="Margolis J."/>
            <person name="Platt D."/>
            <person name="Swimmer C."/>
            <person name="Gnirke A."/>
            <person name="Chen F."/>
            <person name="Vysotskaia V."/>
            <person name="Mannhaupt G."/>
            <person name="Gueldener U."/>
            <person name="Muensterkoetter M."/>
            <person name="Haase D."/>
            <person name="Oesterheld M."/>
            <person name="Mewes H.-W."/>
            <person name="Mauceli E.W."/>
            <person name="DeCaprio D."/>
            <person name="Wade C.M."/>
            <person name="Butler J."/>
            <person name="Young S.K."/>
            <person name="Jaffe D.B."/>
            <person name="Calvo S.E."/>
            <person name="Nusbaum C."/>
            <person name="Galagan J.E."/>
            <person name="Birren B.W."/>
        </authorList>
    </citation>
    <scope>NUCLEOTIDE SEQUENCE [LARGE SCALE GENOMIC DNA]</scope>
    <source>
        <strain>DSM 14603 / FGSC 9021 / UM521</strain>
    </source>
</reference>
<reference key="2">
    <citation type="submission" date="2014-09" db="EMBL/GenBank/DDBJ databases">
        <authorList>
            <person name="Gueldener U."/>
            <person name="Muensterkoetter M."/>
            <person name="Walter M.C."/>
            <person name="Mannhaupt G."/>
            <person name="Kahmann R."/>
        </authorList>
    </citation>
    <scope>GENOME REANNOTATION</scope>
    <source>
        <strain>DSM 14603 / FGSC 9021 / UM521</strain>
    </source>
</reference>
<reference key="3">
    <citation type="journal article" date="2010" name="Mol. Plant Pathol.">
        <title>The autophagy genes ATG8 and ATG1 affect morphogenesis and pathogenicity in Ustilago maydis.</title>
        <authorList>
            <person name="Nadal M."/>
            <person name="Gold S.E."/>
        </authorList>
    </citation>
    <scope>FUNCTION</scope>
    <scope>INDUCTION</scope>
    <scope>DISRUPTION PHENOTYPE</scope>
</reference>
<protein>
    <recommendedName>
        <fullName evidence="1">Serine/threonine-protein kinase ATG1</fullName>
        <ecNumber evidence="1">2.7.11.1</ecNumber>
    </recommendedName>
    <alternativeName>
        <fullName evidence="1">Autophagy-related protein 1</fullName>
    </alternativeName>
</protein>